<feature type="initiator methionine" description="Removed" evidence="1">
    <location>
        <position position="1"/>
    </location>
</feature>
<feature type="chain" id="PRO_0000256846" description="Low molecular weight phosphotyrosine protein phosphatase">
    <location>
        <begin position="2"/>
        <end position="158"/>
    </location>
</feature>
<feature type="active site" description="Nucleophile" evidence="2">
    <location>
        <position position="13"/>
    </location>
</feature>
<feature type="active site" evidence="2">
    <location>
        <position position="19"/>
    </location>
</feature>
<feature type="active site" description="Proton donor" evidence="2">
    <location>
        <position position="130"/>
    </location>
</feature>
<feature type="modified residue" description="N-acetylalanine" evidence="1">
    <location>
        <position position="2"/>
    </location>
</feature>
<feature type="modified residue" description="Phosphotyrosine" evidence="1">
    <location>
        <position position="132"/>
    </location>
</feature>
<feature type="modified residue" description="Phosphotyrosine" evidence="1">
    <location>
        <position position="133"/>
    </location>
</feature>
<dbReference type="EC" id="3.1.3.48"/>
<dbReference type="EC" id="3.1.3.2"/>
<dbReference type="EMBL" id="AJ720119">
    <property type="protein sequence ID" value="CAG31778.1"/>
    <property type="molecule type" value="mRNA"/>
</dbReference>
<dbReference type="RefSeq" id="NP_001034380.1">
    <property type="nucleotide sequence ID" value="NM_001039291.2"/>
</dbReference>
<dbReference type="SMR" id="Q5ZKG5"/>
<dbReference type="BioGRID" id="682668">
    <property type="interactions" value="1"/>
</dbReference>
<dbReference type="FunCoup" id="Q5ZKG5">
    <property type="interactions" value="1843"/>
</dbReference>
<dbReference type="STRING" id="9031.ENSGALP00000060364"/>
<dbReference type="PaxDb" id="9031-ENSGALP00000026345"/>
<dbReference type="Ensembl" id="ENSGALT00000143557">
    <property type="protein sequence ID" value="ENSGALP00000077660"/>
    <property type="gene ID" value="ENSGALG00000057341"/>
</dbReference>
<dbReference type="Ensembl" id="ENSGALT00010008867.1">
    <property type="protein sequence ID" value="ENSGALP00010005211.1"/>
    <property type="gene ID" value="ENSGALG00010003833.1"/>
</dbReference>
<dbReference type="GeneID" id="421909"/>
<dbReference type="KEGG" id="gga:421909"/>
<dbReference type="CTD" id="52"/>
<dbReference type="VEuPathDB" id="HostDB:geneid_421909"/>
<dbReference type="eggNOG" id="KOG3217">
    <property type="taxonomic scope" value="Eukaryota"/>
</dbReference>
<dbReference type="GeneTree" id="ENSGT00940000158351"/>
<dbReference type="HOGENOM" id="CLU_071415_2_0_1"/>
<dbReference type="InParanoid" id="Q5ZKG5"/>
<dbReference type="OMA" id="VCHGNIC"/>
<dbReference type="OrthoDB" id="3388at2759"/>
<dbReference type="PhylomeDB" id="Q5ZKG5"/>
<dbReference type="TreeFam" id="TF353727"/>
<dbReference type="PRO" id="PR:Q5ZKG5"/>
<dbReference type="Proteomes" id="UP000000539">
    <property type="component" value="Chromosome 3"/>
</dbReference>
<dbReference type="Bgee" id="ENSGALG00000016363">
    <property type="expression patterns" value="Expressed in spermatid and 13 other cell types or tissues"/>
</dbReference>
<dbReference type="GO" id="GO:0009898">
    <property type="term" value="C:cytoplasmic side of plasma membrane"/>
    <property type="evidence" value="ECO:0007669"/>
    <property type="project" value="Ensembl"/>
</dbReference>
<dbReference type="GO" id="GO:0005829">
    <property type="term" value="C:cytosol"/>
    <property type="evidence" value="ECO:0007669"/>
    <property type="project" value="Ensembl"/>
</dbReference>
<dbReference type="GO" id="GO:0042383">
    <property type="term" value="C:sarcolemma"/>
    <property type="evidence" value="ECO:0007669"/>
    <property type="project" value="Ensembl"/>
</dbReference>
<dbReference type="GO" id="GO:0003993">
    <property type="term" value="F:acid phosphatase activity"/>
    <property type="evidence" value="ECO:0007669"/>
    <property type="project" value="UniProtKB-EC"/>
</dbReference>
<dbReference type="GO" id="GO:0004726">
    <property type="term" value="F:non-membrane spanning protein tyrosine phosphatase activity"/>
    <property type="evidence" value="ECO:0007669"/>
    <property type="project" value="InterPro"/>
</dbReference>
<dbReference type="GO" id="GO:0004725">
    <property type="term" value="F:protein tyrosine phosphatase activity"/>
    <property type="evidence" value="ECO:0000318"/>
    <property type="project" value="GO_Central"/>
</dbReference>
<dbReference type="CDD" id="cd16343">
    <property type="entry name" value="LMWPTP"/>
    <property type="match status" value="1"/>
</dbReference>
<dbReference type="FunFam" id="3.40.50.2300:FF:000105">
    <property type="entry name" value="Low molecular weight phosphotyrosine protein"/>
    <property type="match status" value="1"/>
</dbReference>
<dbReference type="Gene3D" id="3.40.50.2300">
    <property type="match status" value="1"/>
</dbReference>
<dbReference type="InterPro" id="IPR050438">
    <property type="entry name" value="LMW_PTPase"/>
</dbReference>
<dbReference type="InterPro" id="IPR023485">
    <property type="entry name" value="Ptyr_pPase"/>
</dbReference>
<dbReference type="InterPro" id="IPR036196">
    <property type="entry name" value="Ptyr_pPase_sf"/>
</dbReference>
<dbReference type="InterPro" id="IPR002115">
    <property type="entry name" value="Tyr_Pase_low_mol_wt_mml"/>
</dbReference>
<dbReference type="InterPro" id="IPR017867">
    <property type="entry name" value="Tyr_phospatase_low_mol_wt"/>
</dbReference>
<dbReference type="PANTHER" id="PTHR11717:SF7">
    <property type="entry name" value="LOW MOLECULAR WEIGHT PHOSPHOTYROSINE PROTEIN PHOSPHATASE"/>
    <property type="match status" value="1"/>
</dbReference>
<dbReference type="PANTHER" id="PTHR11717">
    <property type="entry name" value="LOW MOLECULAR WEIGHT PROTEIN TYROSINE PHOSPHATASE"/>
    <property type="match status" value="1"/>
</dbReference>
<dbReference type="Pfam" id="PF01451">
    <property type="entry name" value="LMWPc"/>
    <property type="match status" value="1"/>
</dbReference>
<dbReference type="PRINTS" id="PR00719">
    <property type="entry name" value="LMWPTPASE"/>
</dbReference>
<dbReference type="PRINTS" id="PR00720">
    <property type="entry name" value="MAMMALPTPASE"/>
</dbReference>
<dbReference type="SMART" id="SM00226">
    <property type="entry name" value="LMWPc"/>
    <property type="match status" value="1"/>
</dbReference>
<dbReference type="SUPFAM" id="SSF52788">
    <property type="entry name" value="Phosphotyrosine protein phosphatases I"/>
    <property type="match status" value="1"/>
</dbReference>
<comment type="function">
    <text evidence="1">Acts on tyrosine phosphorylated proteins, low-MW aryl phosphates and natural and synthetic acyl phosphates.</text>
</comment>
<comment type="catalytic activity">
    <reaction>
        <text>O-phospho-L-tyrosyl-[protein] + H2O = L-tyrosyl-[protein] + phosphate</text>
        <dbReference type="Rhea" id="RHEA:10684"/>
        <dbReference type="Rhea" id="RHEA-COMP:10136"/>
        <dbReference type="Rhea" id="RHEA-COMP:20101"/>
        <dbReference type="ChEBI" id="CHEBI:15377"/>
        <dbReference type="ChEBI" id="CHEBI:43474"/>
        <dbReference type="ChEBI" id="CHEBI:46858"/>
        <dbReference type="ChEBI" id="CHEBI:61978"/>
        <dbReference type="EC" id="3.1.3.48"/>
    </reaction>
</comment>
<comment type="catalytic activity">
    <reaction>
        <text>a phosphate monoester + H2O = an alcohol + phosphate</text>
        <dbReference type="Rhea" id="RHEA:15017"/>
        <dbReference type="ChEBI" id="CHEBI:15377"/>
        <dbReference type="ChEBI" id="CHEBI:30879"/>
        <dbReference type="ChEBI" id="CHEBI:43474"/>
        <dbReference type="ChEBI" id="CHEBI:67140"/>
        <dbReference type="EC" id="3.1.3.2"/>
    </reaction>
</comment>
<comment type="subcellular location">
    <subcellularLocation>
        <location evidence="1">Cytoplasm</location>
    </subcellularLocation>
</comment>
<comment type="similarity">
    <text evidence="3">Belongs to the low molecular weight phosphotyrosine protein phosphatase family.</text>
</comment>
<accession>Q5ZKG5</accession>
<gene>
    <name type="primary">ACP1</name>
    <name type="ORF">RCJMB04_11a4</name>
</gene>
<evidence type="ECO:0000250" key="1"/>
<evidence type="ECO:0000250" key="2">
    <source>
        <dbReference type="UniProtKB" id="P11064"/>
    </source>
</evidence>
<evidence type="ECO:0000305" key="3"/>
<organism>
    <name type="scientific">Gallus gallus</name>
    <name type="common">Chicken</name>
    <dbReference type="NCBI Taxonomy" id="9031"/>
    <lineage>
        <taxon>Eukaryota</taxon>
        <taxon>Metazoa</taxon>
        <taxon>Chordata</taxon>
        <taxon>Craniata</taxon>
        <taxon>Vertebrata</taxon>
        <taxon>Euteleostomi</taxon>
        <taxon>Archelosauria</taxon>
        <taxon>Archosauria</taxon>
        <taxon>Dinosauria</taxon>
        <taxon>Saurischia</taxon>
        <taxon>Theropoda</taxon>
        <taxon>Coelurosauria</taxon>
        <taxon>Aves</taxon>
        <taxon>Neognathae</taxon>
        <taxon>Galloanserae</taxon>
        <taxon>Galliformes</taxon>
        <taxon>Phasianidae</taxon>
        <taxon>Phasianinae</taxon>
        <taxon>Gallus</taxon>
    </lineage>
</organism>
<name>PPAC_CHICK</name>
<reference key="1">
    <citation type="journal article" date="2005" name="Genome Biol.">
        <title>Full-length cDNAs from chicken bursal lymphocytes to facilitate gene function analysis.</title>
        <authorList>
            <person name="Caldwell R.B."/>
            <person name="Kierzek A.M."/>
            <person name="Arakawa H."/>
            <person name="Bezzubov Y."/>
            <person name="Zaim J."/>
            <person name="Fiedler P."/>
            <person name="Kutter S."/>
            <person name="Blagodatski A."/>
            <person name="Kostovska D."/>
            <person name="Koter M."/>
            <person name="Plachy J."/>
            <person name="Carninci P."/>
            <person name="Hayashizaki Y."/>
            <person name="Buerstedde J.-M."/>
        </authorList>
    </citation>
    <scope>NUCLEOTIDE SEQUENCE [LARGE SCALE MRNA]</scope>
    <source>
        <strain>CB</strain>
        <tissue>Bursa of Fabricius</tissue>
    </source>
</reference>
<protein>
    <recommendedName>
        <fullName>Low molecular weight phosphotyrosine protein phosphatase</fullName>
        <shortName>LMW-PTP</shortName>
        <shortName>LMW-PTPase</shortName>
        <ecNumber>3.1.3.48</ecNumber>
    </recommendedName>
    <alternativeName>
        <fullName>Low molecular weight cytosolic acid phosphatase</fullName>
        <ecNumber>3.1.3.2</ecNumber>
    </alternativeName>
</protein>
<keyword id="KW-0007">Acetylation</keyword>
<keyword id="KW-0963">Cytoplasm</keyword>
<keyword id="KW-0378">Hydrolase</keyword>
<keyword id="KW-0597">Phosphoprotein</keyword>
<keyword id="KW-0904">Protein phosphatase</keyword>
<keyword id="KW-1185">Reference proteome</keyword>
<sequence>MAAGEVKSVLFVCLGNICRSPIAEAVFRKLVTDEKVENKWRIDSAATSTYEIGNPPDYRGQTCMKKHGITMNHIARQVTKDDFQTFDYILCMDESNLRDLKRKSNQVKDCKAKIELLGAYDPQKQLIIEDPYYGNEKDFETVYEQCVRCCKAFLEKPH</sequence>
<proteinExistence type="evidence at transcript level"/>